<protein>
    <recommendedName>
        <fullName evidence="1">Glutamate--tRNA ligase</fullName>
        <ecNumber evidence="1">6.1.1.17</ecNumber>
    </recommendedName>
    <alternativeName>
        <fullName evidence="1">Glutamyl-tRNA synthetase</fullName>
        <shortName evidence="1">GluRS</shortName>
    </alternativeName>
</protein>
<keyword id="KW-0030">Aminoacyl-tRNA synthetase</keyword>
<keyword id="KW-0067">ATP-binding</keyword>
<keyword id="KW-0963">Cytoplasm</keyword>
<keyword id="KW-0436">Ligase</keyword>
<keyword id="KW-0547">Nucleotide-binding</keyword>
<keyword id="KW-0648">Protein biosynthesis</keyword>
<name>SYE_BURP0</name>
<reference key="1">
    <citation type="journal article" date="2010" name="Genome Biol. Evol.">
        <title>Continuing evolution of Burkholderia mallei through genome reduction and large-scale rearrangements.</title>
        <authorList>
            <person name="Losada L."/>
            <person name="Ronning C.M."/>
            <person name="DeShazer D."/>
            <person name="Woods D."/>
            <person name="Fedorova N."/>
            <person name="Kim H.S."/>
            <person name="Shabalina S.A."/>
            <person name="Pearson T.R."/>
            <person name="Brinkac L."/>
            <person name="Tan P."/>
            <person name="Nandi T."/>
            <person name="Crabtree J."/>
            <person name="Badger J."/>
            <person name="Beckstrom-Sternberg S."/>
            <person name="Saqib M."/>
            <person name="Schutzer S.E."/>
            <person name="Keim P."/>
            <person name="Nierman W.C."/>
        </authorList>
    </citation>
    <scope>NUCLEOTIDE SEQUENCE [LARGE SCALE GENOMIC DNA]</scope>
    <source>
        <strain>1106a</strain>
    </source>
</reference>
<sequence>MTRPVRTRFAPSPTGFIHLGNIRSALYPWAFARKMKGTFVLRIEDTDLERSTEASVDAILEGMAWLGLDYDEGPYYQMQRMDRYREVLAQMLEKDLVYPCYMSTEELDALRERQRAAGEKPRYDGTWRPEPGKVLPEPPAGVTPVLRFRNPLTGSVVWDDAVKGRVEISNEELDDLVIARPDGTPTYNFCVVVDDLDMGITHVIRGDDHVNNTPRQINILRALGGEVPVYAHLPTVLNEQGEKMSKRHGAMSVMGYRDAGYLPEAVLNYLARLGWSHGDAEIFSREQFVEWFDLEHLGKSPAQYDHNKLNWLNNHYIKEADDARLAELAKPFFAALGIDADTIARGPDLVGVMGLMKDRASTVKEIAENSTMFYRAPAPDAQALAQHVTDAVRPALAEFAAALKTAEWTKEAIAAALKAVLGAHKLKMPQLAMPVRLLVAGTTHTPSIDAVLLLFGRDVVVSRLAAALA</sequence>
<accession>A3NWS4</accession>
<proteinExistence type="inferred from homology"/>
<dbReference type="EC" id="6.1.1.17" evidence="1"/>
<dbReference type="EMBL" id="CP000572">
    <property type="protein sequence ID" value="ABN88866.1"/>
    <property type="status" value="ALT_INIT"/>
    <property type="molecule type" value="Genomic_DNA"/>
</dbReference>
<dbReference type="RefSeq" id="WP_004532170.1">
    <property type="nucleotide sequence ID" value="NC_009076.1"/>
</dbReference>
<dbReference type="SMR" id="A3NWS4"/>
<dbReference type="GeneID" id="93060743"/>
<dbReference type="KEGG" id="bpl:BURPS1106A_2541"/>
<dbReference type="HOGENOM" id="CLU_015768_6_0_4"/>
<dbReference type="Proteomes" id="UP000006738">
    <property type="component" value="Chromosome I"/>
</dbReference>
<dbReference type="GO" id="GO:0005829">
    <property type="term" value="C:cytosol"/>
    <property type="evidence" value="ECO:0007669"/>
    <property type="project" value="TreeGrafter"/>
</dbReference>
<dbReference type="GO" id="GO:0005524">
    <property type="term" value="F:ATP binding"/>
    <property type="evidence" value="ECO:0007669"/>
    <property type="project" value="UniProtKB-UniRule"/>
</dbReference>
<dbReference type="GO" id="GO:0004818">
    <property type="term" value="F:glutamate-tRNA ligase activity"/>
    <property type="evidence" value="ECO:0007669"/>
    <property type="project" value="UniProtKB-UniRule"/>
</dbReference>
<dbReference type="GO" id="GO:0000049">
    <property type="term" value="F:tRNA binding"/>
    <property type="evidence" value="ECO:0007669"/>
    <property type="project" value="InterPro"/>
</dbReference>
<dbReference type="GO" id="GO:0008270">
    <property type="term" value="F:zinc ion binding"/>
    <property type="evidence" value="ECO:0007669"/>
    <property type="project" value="InterPro"/>
</dbReference>
<dbReference type="GO" id="GO:0006424">
    <property type="term" value="P:glutamyl-tRNA aminoacylation"/>
    <property type="evidence" value="ECO:0007669"/>
    <property type="project" value="UniProtKB-UniRule"/>
</dbReference>
<dbReference type="CDD" id="cd00808">
    <property type="entry name" value="GluRS_core"/>
    <property type="match status" value="1"/>
</dbReference>
<dbReference type="FunFam" id="3.40.50.620:FF:000007">
    <property type="entry name" value="Glutamate--tRNA ligase"/>
    <property type="match status" value="1"/>
</dbReference>
<dbReference type="Gene3D" id="1.10.10.350">
    <property type="match status" value="1"/>
</dbReference>
<dbReference type="Gene3D" id="1.10.8.70">
    <property type="entry name" value="Glutamate-tRNA synthetase, class I, anticodon-binding domain 1"/>
    <property type="match status" value="1"/>
</dbReference>
<dbReference type="Gene3D" id="3.40.50.620">
    <property type="entry name" value="HUPs"/>
    <property type="match status" value="1"/>
</dbReference>
<dbReference type="HAMAP" id="MF_00022">
    <property type="entry name" value="Glu_tRNA_synth_type1"/>
    <property type="match status" value="1"/>
</dbReference>
<dbReference type="InterPro" id="IPR045462">
    <property type="entry name" value="aa-tRNA-synth_I_cd-bd"/>
</dbReference>
<dbReference type="InterPro" id="IPR020751">
    <property type="entry name" value="aa-tRNA-synth_I_codon-bd_sub2"/>
</dbReference>
<dbReference type="InterPro" id="IPR001412">
    <property type="entry name" value="aa-tRNA-synth_I_CS"/>
</dbReference>
<dbReference type="InterPro" id="IPR008925">
    <property type="entry name" value="aa_tRNA-synth_I_cd-bd_sf"/>
</dbReference>
<dbReference type="InterPro" id="IPR004527">
    <property type="entry name" value="Glu-tRNA-ligase_bac/mito"/>
</dbReference>
<dbReference type="InterPro" id="IPR020752">
    <property type="entry name" value="Glu-tRNA-synth_I_codon-bd_sub1"/>
</dbReference>
<dbReference type="InterPro" id="IPR000924">
    <property type="entry name" value="Glu/Gln-tRNA-synth"/>
</dbReference>
<dbReference type="InterPro" id="IPR020058">
    <property type="entry name" value="Glu/Gln-tRNA-synth_Ib_cat-dom"/>
</dbReference>
<dbReference type="InterPro" id="IPR049940">
    <property type="entry name" value="GluQ/Sye"/>
</dbReference>
<dbReference type="InterPro" id="IPR033910">
    <property type="entry name" value="GluRS_core"/>
</dbReference>
<dbReference type="InterPro" id="IPR014729">
    <property type="entry name" value="Rossmann-like_a/b/a_fold"/>
</dbReference>
<dbReference type="NCBIfam" id="TIGR00464">
    <property type="entry name" value="gltX_bact"/>
    <property type="match status" value="1"/>
</dbReference>
<dbReference type="PANTHER" id="PTHR43311">
    <property type="entry name" value="GLUTAMATE--TRNA LIGASE"/>
    <property type="match status" value="1"/>
</dbReference>
<dbReference type="PANTHER" id="PTHR43311:SF2">
    <property type="entry name" value="GLUTAMATE--TRNA LIGASE, MITOCHONDRIAL-RELATED"/>
    <property type="match status" value="1"/>
</dbReference>
<dbReference type="Pfam" id="PF19269">
    <property type="entry name" value="Anticodon_2"/>
    <property type="match status" value="1"/>
</dbReference>
<dbReference type="Pfam" id="PF00749">
    <property type="entry name" value="tRNA-synt_1c"/>
    <property type="match status" value="1"/>
</dbReference>
<dbReference type="PRINTS" id="PR00987">
    <property type="entry name" value="TRNASYNTHGLU"/>
</dbReference>
<dbReference type="SUPFAM" id="SSF48163">
    <property type="entry name" value="An anticodon-binding domain of class I aminoacyl-tRNA synthetases"/>
    <property type="match status" value="1"/>
</dbReference>
<dbReference type="SUPFAM" id="SSF52374">
    <property type="entry name" value="Nucleotidylyl transferase"/>
    <property type="match status" value="1"/>
</dbReference>
<dbReference type="PROSITE" id="PS00178">
    <property type="entry name" value="AA_TRNA_LIGASE_I"/>
    <property type="match status" value="1"/>
</dbReference>
<feature type="chain" id="PRO_0000367629" description="Glutamate--tRNA ligase">
    <location>
        <begin position="1"/>
        <end position="469"/>
    </location>
</feature>
<feature type="region of interest" description="Disordered" evidence="2">
    <location>
        <begin position="118"/>
        <end position="139"/>
    </location>
</feature>
<feature type="short sequence motif" description="'HIGH' region" evidence="1">
    <location>
        <begin position="11"/>
        <end position="21"/>
    </location>
</feature>
<feature type="short sequence motif" description="'KMSKS' region" evidence="1">
    <location>
        <begin position="243"/>
        <end position="247"/>
    </location>
</feature>
<feature type="compositionally biased region" description="Basic and acidic residues" evidence="2">
    <location>
        <begin position="118"/>
        <end position="131"/>
    </location>
</feature>
<feature type="binding site" evidence="1">
    <location>
        <position position="246"/>
    </location>
    <ligand>
        <name>ATP</name>
        <dbReference type="ChEBI" id="CHEBI:30616"/>
    </ligand>
</feature>
<organism>
    <name type="scientific">Burkholderia pseudomallei (strain 1106a)</name>
    <dbReference type="NCBI Taxonomy" id="357348"/>
    <lineage>
        <taxon>Bacteria</taxon>
        <taxon>Pseudomonadati</taxon>
        <taxon>Pseudomonadota</taxon>
        <taxon>Betaproteobacteria</taxon>
        <taxon>Burkholderiales</taxon>
        <taxon>Burkholderiaceae</taxon>
        <taxon>Burkholderia</taxon>
        <taxon>pseudomallei group</taxon>
    </lineage>
</organism>
<comment type="function">
    <text evidence="1">Catalyzes the attachment of glutamate to tRNA(Glu) in a two-step reaction: glutamate is first activated by ATP to form Glu-AMP and then transferred to the acceptor end of tRNA(Glu).</text>
</comment>
<comment type="catalytic activity">
    <reaction evidence="1">
        <text>tRNA(Glu) + L-glutamate + ATP = L-glutamyl-tRNA(Glu) + AMP + diphosphate</text>
        <dbReference type="Rhea" id="RHEA:23540"/>
        <dbReference type="Rhea" id="RHEA-COMP:9663"/>
        <dbReference type="Rhea" id="RHEA-COMP:9680"/>
        <dbReference type="ChEBI" id="CHEBI:29985"/>
        <dbReference type="ChEBI" id="CHEBI:30616"/>
        <dbReference type="ChEBI" id="CHEBI:33019"/>
        <dbReference type="ChEBI" id="CHEBI:78442"/>
        <dbReference type="ChEBI" id="CHEBI:78520"/>
        <dbReference type="ChEBI" id="CHEBI:456215"/>
        <dbReference type="EC" id="6.1.1.17"/>
    </reaction>
</comment>
<comment type="subunit">
    <text evidence="1">Monomer.</text>
</comment>
<comment type="subcellular location">
    <subcellularLocation>
        <location evidence="1">Cytoplasm</location>
    </subcellularLocation>
</comment>
<comment type="similarity">
    <text evidence="1">Belongs to the class-I aminoacyl-tRNA synthetase family. Glutamate--tRNA ligase type 1 subfamily.</text>
</comment>
<comment type="sequence caution" evidence="3">
    <conflict type="erroneous initiation">
        <sequence resource="EMBL-CDS" id="ABN88866"/>
    </conflict>
</comment>
<gene>
    <name evidence="1" type="primary">gltX</name>
    <name type="ordered locus">BURPS1106A_2541</name>
</gene>
<evidence type="ECO:0000255" key="1">
    <source>
        <dbReference type="HAMAP-Rule" id="MF_00022"/>
    </source>
</evidence>
<evidence type="ECO:0000256" key="2">
    <source>
        <dbReference type="SAM" id="MobiDB-lite"/>
    </source>
</evidence>
<evidence type="ECO:0000305" key="3"/>